<comment type="function">
    <text evidence="1">Required for maturation of 30S ribosomal subunits.</text>
</comment>
<comment type="subcellular location">
    <subcellularLocation>
        <location evidence="1">Cytoplasm</location>
    </subcellularLocation>
</comment>
<comment type="similarity">
    <text evidence="1">Belongs to the RimP family.</text>
</comment>
<proteinExistence type="inferred from homology"/>
<dbReference type="EMBL" id="BA000012">
    <property type="protein sequence ID" value="BAB51981.1"/>
    <property type="molecule type" value="Genomic_DNA"/>
</dbReference>
<dbReference type="RefSeq" id="WP_010913319.1">
    <property type="nucleotide sequence ID" value="NC_002678.2"/>
</dbReference>
<dbReference type="SMR" id="Q98BJ1"/>
<dbReference type="GeneID" id="66680336"/>
<dbReference type="KEGG" id="mlo:mlr5550"/>
<dbReference type="eggNOG" id="COG0779">
    <property type="taxonomic scope" value="Bacteria"/>
</dbReference>
<dbReference type="HOGENOM" id="CLU_070525_0_1_5"/>
<dbReference type="Proteomes" id="UP000000552">
    <property type="component" value="Chromosome"/>
</dbReference>
<dbReference type="GO" id="GO:0005829">
    <property type="term" value="C:cytosol"/>
    <property type="evidence" value="ECO:0007669"/>
    <property type="project" value="TreeGrafter"/>
</dbReference>
<dbReference type="GO" id="GO:0000028">
    <property type="term" value="P:ribosomal small subunit assembly"/>
    <property type="evidence" value="ECO:0007669"/>
    <property type="project" value="TreeGrafter"/>
</dbReference>
<dbReference type="GO" id="GO:0006412">
    <property type="term" value="P:translation"/>
    <property type="evidence" value="ECO:0007669"/>
    <property type="project" value="TreeGrafter"/>
</dbReference>
<dbReference type="CDD" id="cd01734">
    <property type="entry name" value="YlxS_C"/>
    <property type="match status" value="1"/>
</dbReference>
<dbReference type="Gene3D" id="3.30.300.70">
    <property type="entry name" value="RimP-like superfamily, N-terminal"/>
    <property type="match status" value="1"/>
</dbReference>
<dbReference type="HAMAP" id="MF_01077">
    <property type="entry name" value="RimP"/>
    <property type="match status" value="1"/>
</dbReference>
<dbReference type="InterPro" id="IPR003728">
    <property type="entry name" value="Ribosome_maturation_RimP"/>
</dbReference>
<dbReference type="InterPro" id="IPR028998">
    <property type="entry name" value="RimP_C"/>
</dbReference>
<dbReference type="InterPro" id="IPR036847">
    <property type="entry name" value="RimP_C_sf"/>
</dbReference>
<dbReference type="InterPro" id="IPR028989">
    <property type="entry name" value="RimP_N"/>
</dbReference>
<dbReference type="InterPro" id="IPR035956">
    <property type="entry name" value="RimP_N_sf"/>
</dbReference>
<dbReference type="NCBIfam" id="NF000932">
    <property type="entry name" value="PRK00092.2-5"/>
    <property type="match status" value="1"/>
</dbReference>
<dbReference type="PANTHER" id="PTHR33867">
    <property type="entry name" value="RIBOSOME MATURATION FACTOR RIMP"/>
    <property type="match status" value="1"/>
</dbReference>
<dbReference type="PANTHER" id="PTHR33867:SF1">
    <property type="entry name" value="RIBOSOME MATURATION FACTOR RIMP"/>
    <property type="match status" value="1"/>
</dbReference>
<dbReference type="Pfam" id="PF17384">
    <property type="entry name" value="DUF150_C"/>
    <property type="match status" value="1"/>
</dbReference>
<dbReference type="Pfam" id="PF02576">
    <property type="entry name" value="RimP_N"/>
    <property type="match status" value="1"/>
</dbReference>
<dbReference type="SUPFAM" id="SSF74942">
    <property type="entry name" value="YhbC-like, C-terminal domain"/>
    <property type="match status" value="1"/>
</dbReference>
<dbReference type="SUPFAM" id="SSF75420">
    <property type="entry name" value="YhbC-like, N-terminal domain"/>
    <property type="match status" value="1"/>
</dbReference>
<sequence>MTATASEGDDRIIRESGIDARIALIVQPVLRGIGFRLVRVHLSGQNGLTLQIMAEREDGTMTVEDCEEVSRAVSPALDVDDPIEKAYHLEVSSPGIDRPLVRKSDFVTWTGHLVKMETSVIVADRKRFKGKIAEAGENDVLIERDKAAYGEEPTVRVPYDAIAETRLILTDDLIRDALSKDNRARKEAKKRRGEPDDDVPEGAEADATEEHEQES</sequence>
<feature type="chain" id="PRO_0000181910" description="Ribosome maturation factor RimP">
    <location>
        <begin position="1"/>
        <end position="215"/>
    </location>
</feature>
<feature type="region of interest" description="Disordered" evidence="2">
    <location>
        <begin position="180"/>
        <end position="215"/>
    </location>
</feature>
<feature type="compositionally biased region" description="Acidic residues" evidence="2">
    <location>
        <begin position="195"/>
        <end position="207"/>
    </location>
</feature>
<gene>
    <name evidence="1" type="primary">rimP</name>
    <name type="ordered locus">mlr5550</name>
</gene>
<reference key="1">
    <citation type="journal article" date="2000" name="DNA Res.">
        <title>Complete genome structure of the nitrogen-fixing symbiotic bacterium Mesorhizobium loti.</title>
        <authorList>
            <person name="Kaneko T."/>
            <person name="Nakamura Y."/>
            <person name="Sato S."/>
            <person name="Asamizu E."/>
            <person name="Kato T."/>
            <person name="Sasamoto S."/>
            <person name="Watanabe A."/>
            <person name="Idesawa K."/>
            <person name="Ishikawa A."/>
            <person name="Kawashima K."/>
            <person name="Kimura T."/>
            <person name="Kishida Y."/>
            <person name="Kiyokawa C."/>
            <person name="Kohara M."/>
            <person name="Matsumoto M."/>
            <person name="Matsuno A."/>
            <person name="Mochizuki Y."/>
            <person name="Nakayama S."/>
            <person name="Nakazaki N."/>
            <person name="Shimpo S."/>
            <person name="Sugimoto M."/>
            <person name="Takeuchi C."/>
            <person name="Yamada M."/>
            <person name="Tabata S."/>
        </authorList>
    </citation>
    <scope>NUCLEOTIDE SEQUENCE [LARGE SCALE GENOMIC DNA]</scope>
    <source>
        <strain>LMG 29417 / CECT 9101 / MAFF 303099</strain>
    </source>
</reference>
<name>RIMP_RHILO</name>
<accession>Q98BJ1</accession>
<protein>
    <recommendedName>
        <fullName evidence="1">Ribosome maturation factor RimP</fullName>
    </recommendedName>
</protein>
<keyword id="KW-0963">Cytoplasm</keyword>
<keyword id="KW-0690">Ribosome biogenesis</keyword>
<evidence type="ECO:0000255" key="1">
    <source>
        <dbReference type="HAMAP-Rule" id="MF_01077"/>
    </source>
</evidence>
<evidence type="ECO:0000256" key="2">
    <source>
        <dbReference type="SAM" id="MobiDB-lite"/>
    </source>
</evidence>
<organism>
    <name type="scientific">Mesorhizobium japonicum (strain LMG 29417 / CECT 9101 / MAFF 303099)</name>
    <name type="common">Mesorhizobium loti (strain MAFF 303099)</name>
    <dbReference type="NCBI Taxonomy" id="266835"/>
    <lineage>
        <taxon>Bacteria</taxon>
        <taxon>Pseudomonadati</taxon>
        <taxon>Pseudomonadota</taxon>
        <taxon>Alphaproteobacteria</taxon>
        <taxon>Hyphomicrobiales</taxon>
        <taxon>Phyllobacteriaceae</taxon>
        <taxon>Mesorhizobium</taxon>
    </lineage>
</organism>